<dbReference type="EC" id="2.1.1.-"/>
<dbReference type="EMBL" id="AAFI02000096">
    <property type="protein sequence ID" value="EAL63920.1"/>
    <property type="molecule type" value="Genomic_DNA"/>
</dbReference>
<dbReference type="RefSeq" id="XP_637401.1">
    <property type="nucleotide sequence ID" value="XM_632309.1"/>
</dbReference>
<dbReference type="SMR" id="Q54KW9"/>
<dbReference type="FunCoup" id="Q54KW9">
    <property type="interactions" value="16"/>
</dbReference>
<dbReference type="PaxDb" id="44689-DDB0267162"/>
<dbReference type="EnsemblProtists" id="EAL63920">
    <property type="protein sequence ID" value="EAL63920"/>
    <property type="gene ID" value="DDB_G0287111"/>
</dbReference>
<dbReference type="GeneID" id="8625932"/>
<dbReference type="KEGG" id="ddi:DDB_G0287111"/>
<dbReference type="dictyBase" id="DDB_G0287111"/>
<dbReference type="VEuPathDB" id="AmoebaDB:DDB_G0287111"/>
<dbReference type="eggNOG" id="KOG2793">
    <property type="taxonomic scope" value="Eukaryota"/>
</dbReference>
<dbReference type="HOGENOM" id="CLU_1095939_0_0_1"/>
<dbReference type="InParanoid" id="Q54KW9"/>
<dbReference type="OMA" id="RCNEKTI"/>
<dbReference type="PhylomeDB" id="Q54KW9"/>
<dbReference type="PRO" id="PR:Q54KW9"/>
<dbReference type="Proteomes" id="UP000002195">
    <property type="component" value="Chromosome 4"/>
</dbReference>
<dbReference type="GO" id="GO:0005737">
    <property type="term" value="C:cytoplasm"/>
    <property type="evidence" value="ECO:0000318"/>
    <property type="project" value="GO_Central"/>
</dbReference>
<dbReference type="GO" id="GO:0005634">
    <property type="term" value="C:nucleus"/>
    <property type="evidence" value="ECO:0000318"/>
    <property type="project" value="GO_Central"/>
</dbReference>
<dbReference type="GO" id="GO:0008276">
    <property type="term" value="F:protein methyltransferase activity"/>
    <property type="evidence" value="ECO:0000318"/>
    <property type="project" value="GO_Central"/>
</dbReference>
<dbReference type="GO" id="GO:0032259">
    <property type="term" value="P:methylation"/>
    <property type="evidence" value="ECO:0007669"/>
    <property type="project" value="UniProtKB-KW"/>
</dbReference>
<dbReference type="Gene3D" id="3.40.50.150">
    <property type="entry name" value="Vaccinia Virus protein VP39"/>
    <property type="match status" value="1"/>
</dbReference>
<dbReference type="InterPro" id="IPR019410">
    <property type="entry name" value="Methyltransf_16"/>
</dbReference>
<dbReference type="InterPro" id="IPR029063">
    <property type="entry name" value="SAM-dependent_MTases_sf"/>
</dbReference>
<dbReference type="PANTHER" id="PTHR14614">
    <property type="entry name" value="HEPATOCELLULAR CARCINOMA-ASSOCIATED ANTIGEN"/>
    <property type="match status" value="1"/>
</dbReference>
<dbReference type="PANTHER" id="PTHR14614:SF164">
    <property type="entry name" value="HISTONE-ARGININE METHYLTRANSFERASE METTL23"/>
    <property type="match status" value="1"/>
</dbReference>
<dbReference type="Pfam" id="PF10294">
    <property type="entry name" value="Methyltransf_16"/>
    <property type="match status" value="1"/>
</dbReference>
<dbReference type="SUPFAM" id="SSF53335">
    <property type="entry name" value="S-adenosyl-L-methionine-dependent methyltransferases"/>
    <property type="match status" value="1"/>
</dbReference>
<feature type="chain" id="PRO_0000328893" description="Methyltransferase-like protein 23">
    <location>
        <begin position="1"/>
        <end position="254"/>
    </location>
</feature>
<feature type="region of interest" description="Disordered" evidence="2">
    <location>
        <begin position="1"/>
        <end position="27"/>
    </location>
</feature>
<feature type="compositionally biased region" description="Polar residues" evidence="2">
    <location>
        <begin position="11"/>
        <end position="21"/>
    </location>
</feature>
<organism>
    <name type="scientific">Dictyostelium discoideum</name>
    <name type="common">Social amoeba</name>
    <dbReference type="NCBI Taxonomy" id="44689"/>
    <lineage>
        <taxon>Eukaryota</taxon>
        <taxon>Amoebozoa</taxon>
        <taxon>Evosea</taxon>
        <taxon>Eumycetozoa</taxon>
        <taxon>Dictyostelia</taxon>
        <taxon>Dictyosteliales</taxon>
        <taxon>Dictyosteliaceae</taxon>
        <taxon>Dictyostelium</taxon>
    </lineage>
</organism>
<name>MET23_DICDI</name>
<proteinExistence type="inferred from homology"/>
<sequence>MKSFIFRQNPRKQQQEQNNLVDYSDSDDDEECNDDIFVNNEIIINVSEKSSKDYGLFIWDGSLVLSWYLFTLTKNNPQFWNGKNVLELNAGVALPSILLSKLGVNKIIITDRIDGFIEIQNNIIDNLNLNGFNINNNNNINDNKIFIEPLSWGNFEKFSNQLTSSSIDYLITSDCFYDNTKNYDDIFATWYYFLLKNDKLVILLTYQVRCNEKTIFNYLKKWKLKSEILSIKDISIPNYNIDSEIILIKITKNQ</sequence>
<reference key="1">
    <citation type="journal article" date="2005" name="Nature">
        <title>The genome of the social amoeba Dictyostelium discoideum.</title>
        <authorList>
            <person name="Eichinger L."/>
            <person name="Pachebat J.A."/>
            <person name="Gloeckner G."/>
            <person name="Rajandream M.A."/>
            <person name="Sucgang R."/>
            <person name="Berriman M."/>
            <person name="Song J."/>
            <person name="Olsen R."/>
            <person name="Szafranski K."/>
            <person name="Xu Q."/>
            <person name="Tunggal B."/>
            <person name="Kummerfeld S."/>
            <person name="Madera M."/>
            <person name="Konfortov B.A."/>
            <person name="Rivero F."/>
            <person name="Bankier A.T."/>
            <person name="Lehmann R."/>
            <person name="Hamlin N."/>
            <person name="Davies R."/>
            <person name="Gaudet P."/>
            <person name="Fey P."/>
            <person name="Pilcher K."/>
            <person name="Chen G."/>
            <person name="Saunders D."/>
            <person name="Sodergren E.J."/>
            <person name="Davis P."/>
            <person name="Kerhornou A."/>
            <person name="Nie X."/>
            <person name="Hall N."/>
            <person name="Anjard C."/>
            <person name="Hemphill L."/>
            <person name="Bason N."/>
            <person name="Farbrother P."/>
            <person name="Desany B."/>
            <person name="Just E."/>
            <person name="Morio T."/>
            <person name="Rost R."/>
            <person name="Churcher C.M."/>
            <person name="Cooper J."/>
            <person name="Haydock S."/>
            <person name="van Driessche N."/>
            <person name="Cronin A."/>
            <person name="Goodhead I."/>
            <person name="Muzny D.M."/>
            <person name="Mourier T."/>
            <person name="Pain A."/>
            <person name="Lu M."/>
            <person name="Harper D."/>
            <person name="Lindsay R."/>
            <person name="Hauser H."/>
            <person name="James K.D."/>
            <person name="Quiles M."/>
            <person name="Madan Babu M."/>
            <person name="Saito T."/>
            <person name="Buchrieser C."/>
            <person name="Wardroper A."/>
            <person name="Felder M."/>
            <person name="Thangavelu M."/>
            <person name="Johnson D."/>
            <person name="Knights A."/>
            <person name="Loulseged H."/>
            <person name="Mungall K.L."/>
            <person name="Oliver K."/>
            <person name="Price C."/>
            <person name="Quail M.A."/>
            <person name="Urushihara H."/>
            <person name="Hernandez J."/>
            <person name="Rabbinowitsch E."/>
            <person name="Steffen D."/>
            <person name="Sanders M."/>
            <person name="Ma J."/>
            <person name="Kohara Y."/>
            <person name="Sharp S."/>
            <person name="Simmonds M.N."/>
            <person name="Spiegler S."/>
            <person name="Tivey A."/>
            <person name="Sugano S."/>
            <person name="White B."/>
            <person name="Walker D."/>
            <person name="Woodward J.R."/>
            <person name="Winckler T."/>
            <person name="Tanaka Y."/>
            <person name="Shaulsky G."/>
            <person name="Schleicher M."/>
            <person name="Weinstock G.M."/>
            <person name="Rosenthal A."/>
            <person name="Cox E.C."/>
            <person name="Chisholm R.L."/>
            <person name="Gibbs R.A."/>
            <person name="Loomis W.F."/>
            <person name="Platzer M."/>
            <person name="Kay R.R."/>
            <person name="Williams J.G."/>
            <person name="Dear P.H."/>
            <person name="Noegel A.A."/>
            <person name="Barrell B.G."/>
            <person name="Kuspa A."/>
        </authorList>
    </citation>
    <scope>NUCLEOTIDE SEQUENCE [LARGE SCALE GENOMIC DNA]</scope>
    <source>
        <strain>AX4</strain>
    </source>
</reference>
<comment type="function">
    <text evidence="1">Probable methyltransferase.</text>
</comment>
<comment type="similarity">
    <text evidence="3">Belongs to the methyltransferase superfamily. METTL23 family.</text>
</comment>
<gene>
    <name type="ORF">DDB_G0287111</name>
</gene>
<evidence type="ECO:0000250" key="1"/>
<evidence type="ECO:0000256" key="2">
    <source>
        <dbReference type="SAM" id="MobiDB-lite"/>
    </source>
</evidence>
<evidence type="ECO:0000305" key="3"/>
<accession>Q54KW9</accession>
<protein>
    <recommendedName>
        <fullName>Methyltransferase-like protein 23</fullName>
        <ecNumber>2.1.1.-</ecNumber>
    </recommendedName>
</protein>
<keyword id="KW-0489">Methyltransferase</keyword>
<keyword id="KW-1185">Reference proteome</keyword>
<keyword id="KW-0949">S-adenosyl-L-methionine</keyword>
<keyword id="KW-0808">Transferase</keyword>